<reference key="1">
    <citation type="journal article" date="2006" name="Proc. Natl. Acad. Sci. U.S.A.">
        <title>Identification of genes subject to positive selection in uropathogenic strains of Escherichia coli: a comparative genomics approach.</title>
        <authorList>
            <person name="Chen S.L."/>
            <person name="Hung C.-S."/>
            <person name="Xu J."/>
            <person name="Reigstad C.S."/>
            <person name="Magrini V."/>
            <person name="Sabo A."/>
            <person name="Blasiar D."/>
            <person name="Bieri T."/>
            <person name="Meyer R.R."/>
            <person name="Ozersky P."/>
            <person name="Armstrong J.R."/>
            <person name="Fulton R.S."/>
            <person name="Latreille J.P."/>
            <person name="Spieth J."/>
            <person name="Hooton T.M."/>
            <person name="Mardis E.R."/>
            <person name="Hultgren S.J."/>
            <person name="Gordon J.I."/>
        </authorList>
    </citation>
    <scope>NUCLEOTIDE SEQUENCE [LARGE SCALE GENOMIC DNA]</scope>
    <source>
        <strain>UTI89 / UPEC</strain>
    </source>
</reference>
<evidence type="ECO:0000250" key="1">
    <source>
        <dbReference type="UniProtKB" id="P37128"/>
    </source>
</evidence>
<evidence type="ECO:0000255" key="2">
    <source>
        <dbReference type="PROSITE-ProRule" id="PRU00794"/>
    </source>
</evidence>
<evidence type="ECO:0000305" key="3"/>
<dbReference type="EC" id="3.6.1.-" evidence="1"/>
<dbReference type="EMBL" id="CP000243">
    <property type="protein sequence ID" value="ABE08253.1"/>
    <property type="status" value="ALT_INIT"/>
    <property type="molecule type" value="Genomic_DNA"/>
</dbReference>
<dbReference type="RefSeq" id="WP_001296284.1">
    <property type="nucleotide sequence ID" value="NZ_CP064825.1"/>
</dbReference>
<dbReference type="SMR" id="Q1R8R1"/>
<dbReference type="KEGG" id="eci:UTI89_C2793"/>
<dbReference type="HOGENOM" id="CLU_062658_6_0_6"/>
<dbReference type="Proteomes" id="UP000001952">
    <property type="component" value="Chromosome"/>
</dbReference>
<dbReference type="GO" id="GO:0005829">
    <property type="term" value="C:cytosol"/>
    <property type="evidence" value="ECO:0007669"/>
    <property type="project" value="TreeGrafter"/>
</dbReference>
<dbReference type="GO" id="GO:0016818">
    <property type="term" value="F:hydrolase activity, acting on acid anhydrides, in phosphorus-containing anhydrides"/>
    <property type="evidence" value="ECO:0007669"/>
    <property type="project" value="InterPro"/>
</dbReference>
<dbReference type="GO" id="GO:0046872">
    <property type="term" value="F:metal ion binding"/>
    <property type="evidence" value="ECO:0007669"/>
    <property type="project" value="UniProtKB-KW"/>
</dbReference>
<dbReference type="GO" id="GO:0006753">
    <property type="term" value="P:nucleoside phosphate metabolic process"/>
    <property type="evidence" value="ECO:0007669"/>
    <property type="project" value="TreeGrafter"/>
</dbReference>
<dbReference type="GO" id="GO:0019693">
    <property type="term" value="P:ribose phosphate metabolic process"/>
    <property type="evidence" value="ECO:0007669"/>
    <property type="project" value="TreeGrafter"/>
</dbReference>
<dbReference type="CDD" id="cd24157">
    <property type="entry name" value="NUDIX_GDPMK"/>
    <property type="match status" value="1"/>
</dbReference>
<dbReference type="FunFam" id="3.90.79.10:FF:000010">
    <property type="entry name" value="GDP-mannose pyrophosphatase NudK"/>
    <property type="match status" value="1"/>
</dbReference>
<dbReference type="Gene3D" id="3.90.79.10">
    <property type="entry name" value="Nucleoside Triphosphate Pyrophosphohydrolase"/>
    <property type="match status" value="1"/>
</dbReference>
<dbReference type="InterPro" id="IPR004385">
    <property type="entry name" value="NDP_pyrophosphatase"/>
</dbReference>
<dbReference type="InterPro" id="IPR015797">
    <property type="entry name" value="NUDIX_hydrolase-like_dom_sf"/>
</dbReference>
<dbReference type="InterPro" id="IPR000086">
    <property type="entry name" value="NUDIX_hydrolase_dom"/>
</dbReference>
<dbReference type="NCBIfam" id="TIGR00052">
    <property type="entry name" value="nudix-type nucleoside diphosphatase, YffH/AdpP family"/>
    <property type="match status" value="1"/>
</dbReference>
<dbReference type="NCBIfam" id="NF011585">
    <property type="entry name" value="PRK15009.1"/>
    <property type="match status" value="1"/>
</dbReference>
<dbReference type="PANTHER" id="PTHR11839:SF18">
    <property type="entry name" value="NUDIX HYDROLASE DOMAIN-CONTAINING PROTEIN"/>
    <property type="match status" value="1"/>
</dbReference>
<dbReference type="PANTHER" id="PTHR11839">
    <property type="entry name" value="UDP/ADP-SUGAR PYROPHOSPHATASE"/>
    <property type="match status" value="1"/>
</dbReference>
<dbReference type="Pfam" id="PF00293">
    <property type="entry name" value="NUDIX"/>
    <property type="match status" value="1"/>
</dbReference>
<dbReference type="SUPFAM" id="SSF55811">
    <property type="entry name" value="Nudix"/>
    <property type="match status" value="1"/>
</dbReference>
<dbReference type="PROSITE" id="PS51462">
    <property type="entry name" value="NUDIX"/>
    <property type="match status" value="1"/>
</dbReference>
<feature type="chain" id="PRO_0000342485" description="GDP-mannose pyrophosphatase">
    <location>
        <begin position="1"/>
        <end position="191"/>
    </location>
</feature>
<feature type="domain" description="Nudix hydrolase" evidence="2">
    <location>
        <begin position="43"/>
        <end position="180"/>
    </location>
</feature>
<feature type="short sequence motif" description="Nudix box">
    <location>
        <begin position="86"/>
        <end position="106"/>
    </location>
</feature>
<feature type="binding site" description="in other chain" evidence="1">
    <location>
        <position position="17"/>
    </location>
    <ligand>
        <name>GDP-alpha-D-mannose</name>
        <dbReference type="ChEBI" id="CHEBI:57527"/>
        <note>ligand shared between dimeric partners</note>
    </ligand>
</feature>
<feature type="binding site" evidence="1">
    <location>
        <begin position="38"/>
        <end position="40"/>
    </location>
    <ligand>
        <name>GDP-alpha-D-mannose</name>
        <dbReference type="ChEBI" id="CHEBI:57527"/>
        <note>ligand shared between dimeric partners</note>
    </ligand>
</feature>
<feature type="binding site" description="in other chain" evidence="1">
    <location>
        <position position="67"/>
    </location>
    <ligand>
        <name>GDP-alpha-D-mannose</name>
        <dbReference type="ChEBI" id="CHEBI:57527"/>
        <note>ligand shared between dimeric partners</note>
    </ligand>
</feature>
<feature type="binding site" description="in other chain" evidence="1">
    <location>
        <begin position="85"/>
        <end position="87"/>
    </location>
    <ligand>
        <name>GDP-alpha-D-mannose</name>
        <dbReference type="ChEBI" id="CHEBI:57527"/>
        <note>ligand shared between dimeric partners</note>
    </ligand>
</feature>
<feature type="binding site" evidence="1">
    <location>
        <position position="85"/>
    </location>
    <ligand>
        <name>Mg(2+)</name>
        <dbReference type="ChEBI" id="CHEBI:18420"/>
        <label>1</label>
    </ligand>
</feature>
<feature type="binding site" evidence="1">
    <location>
        <position position="100"/>
    </location>
    <ligand>
        <name>Mg(2+)</name>
        <dbReference type="ChEBI" id="CHEBI:18420"/>
        <label>2</label>
    </ligand>
</feature>
<feature type="binding site" description="in other chain" evidence="1">
    <location>
        <position position="104"/>
    </location>
    <ligand>
        <name>GDP-alpha-D-mannose</name>
        <dbReference type="ChEBI" id="CHEBI:57527"/>
        <note>ligand shared between dimeric partners</note>
    </ligand>
</feature>
<feature type="binding site" evidence="1">
    <location>
        <position position="104"/>
    </location>
    <ligand>
        <name>Mg(2+)</name>
        <dbReference type="ChEBI" id="CHEBI:18420"/>
        <label>1</label>
    </ligand>
</feature>
<feature type="binding site" evidence="1">
    <location>
        <position position="104"/>
    </location>
    <ligand>
        <name>Mg(2+)</name>
        <dbReference type="ChEBI" id="CHEBI:18420"/>
        <label>2</label>
    </ligand>
</feature>
<feature type="binding site" description="in other chain" evidence="1">
    <location>
        <position position="127"/>
    </location>
    <ligand>
        <name>GDP-alpha-D-mannose</name>
        <dbReference type="ChEBI" id="CHEBI:57527"/>
        <note>ligand shared between dimeric partners</note>
    </ligand>
</feature>
<feature type="binding site" description="in other chain" evidence="1">
    <location>
        <begin position="150"/>
        <end position="151"/>
    </location>
    <ligand>
        <name>GDP-alpha-D-mannose</name>
        <dbReference type="ChEBI" id="CHEBI:57527"/>
        <note>ligand shared between dimeric partners</note>
    </ligand>
</feature>
<feature type="binding site" evidence="1">
    <location>
        <position position="151"/>
    </location>
    <ligand>
        <name>Mg(2+)</name>
        <dbReference type="ChEBI" id="CHEBI:18420"/>
        <label>2</label>
    </ligand>
</feature>
<feature type="binding site" description="in other chain" evidence="1">
    <location>
        <position position="176"/>
    </location>
    <ligand>
        <name>GDP-alpha-D-mannose</name>
        <dbReference type="ChEBI" id="CHEBI:57527"/>
        <note>ligand shared between dimeric partners</note>
    </ligand>
</feature>
<proteinExistence type="inferred from homology"/>
<gene>
    <name type="primary">nudK</name>
    <name type="ordered locus">UTI89_C2793</name>
</gene>
<accession>Q1R8R1</accession>
<keyword id="KW-0378">Hydrolase</keyword>
<keyword id="KW-0460">Magnesium</keyword>
<keyword id="KW-0479">Metal-binding</keyword>
<protein>
    <recommendedName>
        <fullName>GDP-mannose pyrophosphatase</fullName>
        <ecNumber evidence="1">3.6.1.-</ecNumber>
    </recommendedName>
    <alternativeName>
        <fullName>GDP-mannose hydrolase</fullName>
    </alternativeName>
    <alternativeName>
        <fullName>GDPMK</fullName>
    </alternativeName>
</protein>
<comment type="function">
    <text evidence="1">Nucleoside diphosphate sugar hydrolase that hydrolyzes GDP-mannose as its preferred substrate, yielding GMP and mannose-1-phosphate.</text>
</comment>
<comment type="catalytic activity">
    <reaction evidence="1">
        <text>GDP-alpha-D-mannose + H2O = alpha-D-mannose 1-phosphate + GMP + 2 H(+)</text>
        <dbReference type="Rhea" id="RHEA:27978"/>
        <dbReference type="ChEBI" id="CHEBI:15377"/>
        <dbReference type="ChEBI" id="CHEBI:15378"/>
        <dbReference type="ChEBI" id="CHEBI:57527"/>
        <dbReference type="ChEBI" id="CHEBI:58115"/>
        <dbReference type="ChEBI" id="CHEBI:58409"/>
    </reaction>
</comment>
<comment type="cofactor">
    <cofactor evidence="1">
        <name>Mg(2+)</name>
        <dbReference type="ChEBI" id="CHEBI:18420"/>
    </cofactor>
</comment>
<comment type="subunit">
    <text evidence="1">Homodimer.</text>
</comment>
<comment type="domain">
    <text evidence="1">In the dimer, the N-terminal domains are swapped between the two monomers, such that residues of both chains contribute to the active site.</text>
</comment>
<comment type="similarity">
    <text evidence="3">Belongs to the Nudix hydrolase family. NudK subfamily.</text>
</comment>
<comment type="sequence caution" evidence="3">
    <conflict type="erroneous initiation">
        <sequence resource="EMBL-CDS" id="ABE08253"/>
    </conflict>
</comment>
<organism>
    <name type="scientific">Escherichia coli (strain UTI89 / UPEC)</name>
    <dbReference type="NCBI Taxonomy" id="364106"/>
    <lineage>
        <taxon>Bacteria</taxon>
        <taxon>Pseudomonadati</taxon>
        <taxon>Pseudomonadota</taxon>
        <taxon>Gammaproteobacteria</taxon>
        <taxon>Enterobacterales</taxon>
        <taxon>Enterobacteriaceae</taxon>
        <taxon>Escherichia</taxon>
    </lineage>
</organism>
<sequence>MTQQITLVKDKILSDNYFTLHNITYDLTRKDGEVIRHKREVYDRGNGATILLYNAKKKTVVLIRQFRVATWVNGNESGQLIETCAGLLDNDEPEVCIRKEAIEETGYEVGEVRKLFELYMSPGGVTELIHFFIAEYSDSQRANAGGGVEDEDIEVLELPFSQALEMIKTGEIRDGKTVLLLNYLQMSHLMD</sequence>
<name>NUDK_ECOUT</name>